<sequence>MVDHQWTPLQKEVISGLSAGSVTTLVVHPLDLLKVRLQLSATSAQKAHYGPFMVIKEIIRSSANSGRSVTNELYRGLSINLFGNAIAWGVYFGLYGVTKELIYKSVAKPGETQLKGVGNDHKMNSLIYLSAGASSGLMTAILTNPIWVIKTRIMSTSKGAQGAYTSMYNGVQQLLRTDGFQGLWKGLVPALFGVSQGALYFAVYDTLKQRKLRRKRENGLDIHLTNLETIEITSLGKMVSVTLVYPFQLLKSNLQSFRANEQKFRLFPLIKLIIANDGFVGLYKGLSANLVRAIPSTCITFCVYENLKHRL</sequence>
<name>FLX1_YEAST</name>
<keyword id="KW-0472">Membrane</keyword>
<keyword id="KW-0496">Mitochondrion</keyword>
<keyword id="KW-0999">Mitochondrion inner membrane</keyword>
<keyword id="KW-1185">Reference proteome</keyword>
<keyword id="KW-0677">Repeat</keyword>
<keyword id="KW-0812">Transmembrane</keyword>
<keyword id="KW-1133">Transmembrane helix</keyword>
<keyword id="KW-0813">Transport</keyword>
<accession>P40464</accession>
<accession>D6VVF3</accession>
<dbReference type="EMBL" id="Z38059">
    <property type="protein sequence ID" value="CAA86144.1"/>
    <property type="molecule type" value="Genomic_DNA"/>
</dbReference>
<dbReference type="EMBL" id="L41168">
    <property type="protein sequence ID" value="AAA64973.1"/>
    <property type="molecule type" value="Genomic_DNA"/>
</dbReference>
<dbReference type="EMBL" id="AY692757">
    <property type="protein sequence ID" value="AAT92776.1"/>
    <property type="molecule type" value="Genomic_DNA"/>
</dbReference>
<dbReference type="EMBL" id="BK006942">
    <property type="protein sequence ID" value="DAA08419.1"/>
    <property type="molecule type" value="Genomic_DNA"/>
</dbReference>
<dbReference type="PIR" id="S48400">
    <property type="entry name" value="S48400"/>
</dbReference>
<dbReference type="RefSeq" id="NP_012132.3">
    <property type="nucleotide sequence ID" value="NM_001179482.3"/>
</dbReference>
<dbReference type="SMR" id="P40464"/>
<dbReference type="BioGRID" id="34857">
    <property type="interactions" value="311"/>
</dbReference>
<dbReference type="DIP" id="DIP-5662N"/>
<dbReference type="FunCoup" id="P40464">
    <property type="interactions" value="149"/>
</dbReference>
<dbReference type="IntAct" id="P40464">
    <property type="interactions" value="2"/>
</dbReference>
<dbReference type="MINT" id="P40464"/>
<dbReference type="STRING" id="4932.YIL134W"/>
<dbReference type="TCDB" id="2.A.29.10.1">
    <property type="family name" value="the mitochondrial carrier (mc) family"/>
</dbReference>
<dbReference type="CarbonylDB" id="P40464"/>
<dbReference type="PaxDb" id="4932-YIL134W"/>
<dbReference type="PeptideAtlas" id="P40464"/>
<dbReference type="EnsemblFungi" id="YIL134W_mRNA">
    <property type="protein sequence ID" value="YIL134W"/>
    <property type="gene ID" value="YIL134W"/>
</dbReference>
<dbReference type="GeneID" id="854672"/>
<dbReference type="KEGG" id="sce:YIL134W"/>
<dbReference type="AGR" id="SGD:S000001396"/>
<dbReference type="SGD" id="S000001396">
    <property type="gene designation" value="FLX1"/>
</dbReference>
<dbReference type="VEuPathDB" id="FungiDB:YIL134W"/>
<dbReference type="eggNOG" id="KOG0764">
    <property type="taxonomic scope" value="Eukaryota"/>
</dbReference>
<dbReference type="GeneTree" id="ENSGT00920000149145"/>
<dbReference type="HOGENOM" id="CLU_015166_6_4_1"/>
<dbReference type="InParanoid" id="P40464"/>
<dbReference type="OMA" id="TTVWKHE"/>
<dbReference type="OrthoDB" id="428293at2759"/>
<dbReference type="BioCyc" id="YEAST:G3O-31385-MONOMER"/>
<dbReference type="Reactome" id="R-SCE-196757">
    <property type="pathway name" value="Metabolism of folate and pterines"/>
</dbReference>
<dbReference type="BioGRID-ORCS" id="854672">
    <property type="hits" value="3 hits in 10 CRISPR screens"/>
</dbReference>
<dbReference type="PRO" id="PR:P40464"/>
<dbReference type="Proteomes" id="UP000002311">
    <property type="component" value="Chromosome IX"/>
</dbReference>
<dbReference type="RNAct" id="P40464">
    <property type="molecule type" value="protein"/>
</dbReference>
<dbReference type="GO" id="GO:0005743">
    <property type="term" value="C:mitochondrial inner membrane"/>
    <property type="evidence" value="ECO:0007669"/>
    <property type="project" value="UniProtKB-SubCell"/>
</dbReference>
<dbReference type="GO" id="GO:0005739">
    <property type="term" value="C:mitochondrion"/>
    <property type="evidence" value="ECO:0000314"/>
    <property type="project" value="SGD"/>
</dbReference>
<dbReference type="GO" id="GO:0015230">
    <property type="term" value="F:FAD transmembrane transporter activity"/>
    <property type="evidence" value="ECO:0000315"/>
    <property type="project" value="SGD"/>
</dbReference>
<dbReference type="GO" id="GO:0008517">
    <property type="term" value="F:folic acid transmembrane transporter activity"/>
    <property type="evidence" value="ECO:0000318"/>
    <property type="project" value="GO_Central"/>
</dbReference>
<dbReference type="GO" id="GO:0015883">
    <property type="term" value="P:FAD transport"/>
    <property type="evidence" value="ECO:0000315"/>
    <property type="project" value="SGD"/>
</dbReference>
<dbReference type="GO" id="GO:0055085">
    <property type="term" value="P:transmembrane transport"/>
    <property type="evidence" value="ECO:0000318"/>
    <property type="project" value="GO_Central"/>
</dbReference>
<dbReference type="FunFam" id="1.50.40.10:FF:000102">
    <property type="entry name" value="Folate carrier protein Flx1"/>
    <property type="match status" value="1"/>
</dbReference>
<dbReference type="Gene3D" id="1.50.40.10">
    <property type="entry name" value="Mitochondrial carrier domain"/>
    <property type="match status" value="1"/>
</dbReference>
<dbReference type="InterPro" id="IPR002067">
    <property type="entry name" value="Mit_carrier"/>
</dbReference>
<dbReference type="InterPro" id="IPR018108">
    <property type="entry name" value="Mitochondrial_sb/sol_carrier"/>
</dbReference>
<dbReference type="InterPro" id="IPR023395">
    <property type="entry name" value="Mt_carrier_dom_sf"/>
</dbReference>
<dbReference type="InterPro" id="IPR044712">
    <property type="entry name" value="SLC25A32-like"/>
</dbReference>
<dbReference type="PANTHER" id="PTHR45683">
    <property type="entry name" value="MITOCHONDRIAL NICOTINAMIDE ADENINE DINUCLEOTIDE TRANSPORTER 1-RELATED-RELATED"/>
    <property type="match status" value="1"/>
</dbReference>
<dbReference type="Pfam" id="PF00153">
    <property type="entry name" value="Mito_carr"/>
    <property type="match status" value="3"/>
</dbReference>
<dbReference type="PRINTS" id="PR00926">
    <property type="entry name" value="MITOCARRIER"/>
</dbReference>
<dbReference type="SUPFAM" id="SSF103506">
    <property type="entry name" value="Mitochondrial carrier"/>
    <property type="match status" value="1"/>
</dbReference>
<dbReference type="PROSITE" id="PS50920">
    <property type="entry name" value="SOLCAR"/>
    <property type="match status" value="3"/>
</dbReference>
<proteinExistence type="inferred from homology"/>
<gene>
    <name type="primary">FLX1</name>
    <name type="ordered locus">YIL134W</name>
</gene>
<comment type="function">
    <text>Transport of FAD from the cytosol to the mitochondrial matrix.</text>
</comment>
<comment type="subcellular location">
    <subcellularLocation>
        <location>Mitochondrion inner membrane</location>
        <topology>Multi-pass membrane protein</topology>
    </subcellularLocation>
</comment>
<comment type="similarity">
    <text evidence="2">Belongs to the mitochondrial carrier (TC 2.A.29) family.</text>
</comment>
<evidence type="ECO:0000255" key="1"/>
<evidence type="ECO:0000305" key="2"/>
<organism>
    <name type="scientific">Saccharomyces cerevisiae (strain ATCC 204508 / S288c)</name>
    <name type="common">Baker's yeast</name>
    <dbReference type="NCBI Taxonomy" id="559292"/>
    <lineage>
        <taxon>Eukaryota</taxon>
        <taxon>Fungi</taxon>
        <taxon>Dikarya</taxon>
        <taxon>Ascomycota</taxon>
        <taxon>Saccharomycotina</taxon>
        <taxon>Saccharomycetes</taxon>
        <taxon>Saccharomycetales</taxon>
        <taxon>Saccharomycetaceae</taxon>
        <taxon>Saccharomyces</taxon>
    </lineage>
</organism>
<reference key="1">
    <citation type="journal article" date="1996" name="J. Biol. Chem.">
        <title>FLX1 codes for a carrier protein involved in maintaining a proper balance of flavin nucleotides in yeast mitochondria.</title>
        <authorList>
            <person name="Tzagoloff A."/>
            <person name="Jang J."/>
            <person name="Glerum D.M."/>
            <person name="Wu M."/>
        </authorList>
    </citation>
    <scope>NUCLEOTIDE SEQUENCE [GENOMIC DNA]</scope>
</reference>
<reference key="2">
    <citation type="journal article" date="1997" name="Nature">
        <title>The nucleotide sequence of Saccharomyces cerevisiae chromosome IX.</title>
        <authorList>
            <person name="Churcher C.M."/>
            <person name="Bowman S."/>
            <person name="Badcock K."/>
            <person name="Bankier A.T."/>
            <person name="Brown D."/>
            <person name="Chillingworth T."/>
            <person name="Connor R."/>
            <person name="Devlin K."/>
            <person name="Gentles S."/>
            <person name="Hamlin N."/>
            <person name="Harris D.E."/>
            <person name="Horsnell T."/>
            <person name="Hunt S."/>
            <person name="Jagels K."/>
            <person name="Jones M."/>
            <person name="Lye G."/>
            <person name="Moule S."/>
            <person name="Odell C."/>
            <person name="Pearson D."/>
            <person name="Rajandream M.A."/>
            <person name="Rice P."/>
            <person name="Rowley N."/>
            <person name="Skelton J."/>
            <person name="Smith V."/>
            <person name="Walsh S.V."/>
            <person name="Whitehead S."/>
            <person name="Barrell B.G."/>
        </authorList>
    </citation>
    <scope>NUCLEOTIDE SEQUENCE [LARGE SCALE GENOMIC DNA]</scope>
    <source>
        <strain>ATCC 204508 / S288c</strain>
    </source>
</reference>
<reference key="3">
    <citation type="journal article" date="2014" name="G3 (Bethesda)">
        <title>The reference genome sequence of Saccharomyces cerevisiae: Then and now.</title>
        <authorList>
            <person name="Engel S.R."/>
            <person name="Dietrich F.S."/>
            <person name="Fisk D.G."/>
            <person name="Binkley G."/>
            <person name="Balakrishnan R."/>
            <person name="Costanzo M.C."/>
            <person name="Dwight S.S."/>
            <person name="Hitz B.C."/>
            <person name="Karra K."/>
            <person name="Nash R.S."/>
            <person name="Weng S."/>
            <person name="Wong E.D."/>
            <person name="Lloyd P."/>
            <person name="Skrzypek M.S."/>
            <person name="Miyasato S.R."/>
            <person name="Simison M."/>
            <person name="Cherry J.M."/>
        </authorList>
    </citation>
    <scope>GENOME REANNOTATION</scope>
    <source>
        <strain>ATCC 204508 / S288c</strain>
    </source>
</reference>
<reference key="4">
    <citation type="journal article" date="2007" name="Genome Res.">
        <title>Approaching a complete repository of sequence-verified protein-encoding clones for Saccharomyces cerevisiae.</title>
        <authorList>
            <person name="Hu Y."/>
            <person name="Rolfs A."/>
            <person name="Bhullar B."/>
            <person name="Murthy T.V.S."/>
            <person name="Zhu C."/>
            <person name="Berger M.F."/>
            <person name="Camargo A.A."/>
            <person name="Kelley F."/>
            <person name="McCarron S."/>
            <person name="Jepson D."/>
            <person name="Richardson A."/>
            <person name="Raphael J."/>
            <person name="Moreira D."/>
            <person name="Taycher E."/>
            <person name="Zuo D."/>
            <person name="Mohr S."/>
            <person name="Kane M.F."/>
            <person name="Williamson J."/>
            <person name="Simpson A.J.G."/>
            <person name="Bulyk M.L."/>
            <person name="Harlow E."/>
            <person name="Marsischky G."/>
            <person name="Kolodner R.D."/>
            <person name="LaBaer J."/>
        </authorList>
    </citation>
    <scope>NUCLEOTIDE SEQUENCE [GENOMIC DNA]</scope>
    <source>
        <strain>ATCC 204508 / S288c</strain>
    </source>
</reference>
<protein>
    <recommendedName>
        <fullName>Mitochondrial FAD carrier protein FLX1</fullName>
    </recommendedName>
</protein>
<feature type="chain" id="PRO_0000090682" description="Mitochondrial FAD carrier protein FLX1">
    <location>
        <begin position="1"/>
        <end position="311"/>
    </location>
</feature>
<feature type="transmembrane region" description="Helical; Name=1" evidence="1">
    <location>
        <begin position="13"/>
        <end position="33"/>
    </location>
</feature>
<feature type="transmembrane region" description="Helical; Name=2" evidence="1">
    <location>
        <begin position="77"/>
        <end position="97"/>
    </location>
</feature>
<feature type="transmembrane region" description="Helical; Name=3" evidence="1">
    <location>
        <begin position="129"/>
        <end position="149"/>
    </location>
</feature>
<feature type="transmembrane region" description="Helical; Name=4" evidence="1">
    <location>
        <begin position="183"/>
        <end position="203"/>
    </location>
</feature>
<feature type="transmembrane region" description="Helical; Name=5" evidence="1">
    <location>
        <begin position="230"/>
        <end position="250"/>
    </location>
</feature>
<feature type="transmembrane region" description="Helical; Name=6" evidence="1">
    <location>
        <begin position="266"/>
        <end position="286"/>
    </location>
</feature>
<feature type="repeat" description="Solcar 1">
    <location>
        <begin position="7"/>
        <end position="101"/>
    </location>
</feature>
<feature type="repeat" description="Solcar 2">
    <location>
        <begin position="123"/>
        <end position="210"/>
    </location>
</feature>
<feature type="repeat" description="Solcar 3">
    <location>
        <begin position="224"/>
        <end position="310"/>
    </location>
</feature>